<name>MIAA_AERS4</name>
<comment type="function">
    <text evidence="1">Catalyzes the transfer of a dimethylallyl group onto the adenine at position 37 in tRNAs that read codons beginning with uridine, leading to the formation of N6-(dimethylallyl)adenosine (i(6)A).</text>
</comment>
<comment type="catalytic activity">
    <reaction evidence="1">
        <text>adenosine(37) in tRNA + dimethylallyl diphosphate = N(6)-dimethylallyladenosine(37) in tRNA + diphosphate</text>
        <dbReference type="Rhea" id="RHEA:26482"/>
        <dbReference type="Rhea" id="RHEA-COMP:10162"/>
        <dbReference type="Rhea" id="RHEA-COMP:10375"/>
        <dbReference type="ChEBI" id="CHEBI:33019"/>
        <dbReference type="ChEBI" id="CHEBI:57623"/>
        <dbReference type="ChEBI" id="CHEBI:74411"/>
        <dbReference type="ChEBI" id="CHEBI:74415"/>
        <dbReference type="EC" id="2.5.1.75"/>
    </reaction>
</comment>
<comment type="cofactor">
    <cofactor evidence="1">
        <name>Mg(2+)</name>
        <dbReference type="ChEBI" id="CHEBI:18420"/>
    </cofactor>
</comment>
<comment type="subunit">
    <text evidence="1">Monomer.</text>
</comment>
<comment type="similarity">
    <text evidence="1">Belongs to the IPP transferase family.</text>
</comment>
<sequence length="310" mass="34502">MNVTDLPNAIFLMGPTASGKTDLAIALCQTLPCDIISVDSALIYRGMDIGTAKPTAQELALAPHKLIDIIDPALSYSAADFCRDALREMNDIVARGRIPLLVGGTMLYFKALLEGLSPLPSADPAIRAELEEEAARLGWQALHDELVRIDPVAGARIHPNDPQRLSRALEVYRISGKTLTELTQVQGEGLPYRVHQFAIAPSDRALLHKRIEQRFDKMLQSGFEQEVRALYERGDLTPHLPAIRCVGYRQMWDYLAGEVEYDEMRYRGIVATRQLAKRQMTWLRGWPEVTWLESGESGNLARVVARAGVA</sequence>
<dbReference type="EC" id="2.5.1.75" evidence="1"/>
<dbReference type="EMBL" id="CP000644">
    <property type="protein sequence ID" value="ABO91348.1"/>
    <property type="molecule type" value="Genomic_DNA"/>
</dbReference>
<dbReference type="SMR" id="A4SR26"/>
<dbReference type="STRING" id="29491.GCA_000820065_03761"/>
<dbReference type="KEGG" id="asa:ASA_3370"/>
<dbReference type="eggNOG" id="COG0324">
    <property type="taxonomic scope" value="Bacteria"/>
</dbReference>
<dbReference type="HOGENOM" id="CLU_032616_0_0_6"/>
<dbReference type="Proteomes" id="UP000000225">
    <property type="component" value="Chromosome"/>
</dbReference>
<dbReference type="GO" id="GO:0005524">
    <property type="term" value="F:ATP binding"/>
    <property type="evidence" value="ECO:0007669"/>
    <property type="project" value="UniProtKB-UniRule"/>
</dbReference>
<dbReference type="GO" id="GO:0052381">
    <property type="term" value="F:tRNA dimethylallyltransferase activity"/>
    <property type="evidence" value="ECO:0007669"/>
    <property type="project" value="UniProtKB-UniRule"/>
</dbReference>
<dbReference type="GO" id="GO:0006400">
    <property type="term" value="P:tRNA modification"/>
    <property type="evidence" value="ECO:0007669"/>
    <property type="project" value="TreeGrafter"/>
</dbReference>
<dbReference type="FunFam" id="1.10.20.140:FF:000001">
    <property type="entry name" value="tRNA dimethylallyltransferase"/>
    <property type="match status" value="1"/>
</dbReference>
<dbReference type="Gene3D" id="1.10.20.140">
    <property type="match status" value="1"/>
</dbReference>
<dbReference type="Gene3D" id="3.40.50.300">
    <property type="entry name" value="P-loop containing nucleotide triphosphate hydrolases"/>
    <property type="match status" value="1"/>
</dbReference>
<dbReference type="HAMAP" id="MF_00185">
    <property type="entry name" value="IPP_trans"/>
    <property type="match status" value="1"/>
</dbReference>
<dbReference type="InterPro" id="IPR039657">
    <property type="entry name" value="Dimethylallyltransferase"/>
</dbReference>
<dbReference type="InterPro" id="IPR018022">
    <property type="entry name" value="IPT"/>
</dbReference>
<dbReference type="InterPro" id="IPR027417">
    <property type="entry name" value="P-loop_NTPase"/>
</dbReference>
<dbReference type="NCBIfam" id="TIGR00174">
    <property type="entry name" value="miaA"/>
    <property type="match status" value="1"/>
</dbReference>
<dbReference type="PANTHER" id="PTHR11088">
    <property type="entry name" value="TRNA DIMETHYLALLYLTRANSFERASE"/>
    <property type="match status" value="1"/>
</dbReference>
<dbReference type="PANTHER" id="PTHR11088:SF60">
    <property type="entry name" value="TRNA DIMETHYLALLYLTRANSFERASE"/>
    <property type="match status" value="1"/>
</dbReference>
<dbReference type="Pfam" id="PF01715">
    <property type="entry name" value="IPPT"/>
    <property type="match status" value="1"/>
</dbReference>
<dbReference type="SUPFAM" id="SSF52540">
    <property type="entry name" value="P-loop containing nucleoside triphosphate hydrolases"/>
    <property type="match status" value="2"/>
</dbReference>
<proteinExistence type="inferred from homology"/>
<protein>
    <recommendedName>
        <fullName evidence="1">tRNA dimethylallyltransferase</fullName>
        <ecNumber evidence="1">2.5.1.75</ecNumber>
    </recommendedName>
    <alternativeName>
        <fullName evidence="1">Dimethylallyl diphosphate:tRNA dimethylallyltransferase</fullName>
        <shortName evidence="1">DMAPP:tRNA dimethylallyltransferase</shortName>
        <shortName evidence="1">DMATase</shortName>
    </alternativeName>
    <alternativeName>
        <fullName evidence="1">Isopentenyl-diphosphate:tRNA isopentenyltransferase</fullName>
        <shortName evidence="1">IPP transferase</shortName>
        <shortName evidence="1">IPPT</shortName>
        <shortName evidence="1">IPTase</shortName>
    </alternativeName>
</protein>
<reference key="1">
    <citation type="journal article" date="2008" name="BMC Genomics">
        <title>The genome of Aeromonas salmonicida subsp. salmonicida A449: insights into the evolution of a fish pathogen.</title>
        <authorList>
            <person name="Reith M.E."/>
            <person name="Singh R.K."/>
            <person name="Curtis B."/>
            <person name="Boyd J.M."/>
            <person name="Bouevitch A."/>
            <person name="Kimball J."/>
            <person name="Munholland J."/>
            <person name="Murphy C."/>
            <person name="Sarty D."/>
            <person name="Williams J."/>
            <person name="Nash J.H."/>
            <person name="Johnson S.C."/>
            <person name="Brown L.L."/>
        </authorList>
    </citation>
    <scope>NUCLEOTIDE SEQUENCE [LARGE SCALE GENOMIC DNA]</scope>
    <source>
        <strain>A449</strain>
    </source>
</reference>
<accession>A4SR26</accession>
<feature type="chain" id="PRO_0000377053" description="tRNA dimethylallyltransferase">
    <location>
        <begin position="1"/>
        <end position="310"/>
    </location>
</feature>
<feature type="region of interest" description="Interaction with substrate tRNA" evidence="1">
    <location>
        <begin position="39"/>
        <end position="42"/>
    </location>
</feature>
<feature type="region of interest" description="Interaction with substrate tRNA" evidence="1">
    <location>
        <begin position="163"/>
        <end position="167"/>
    </location>
</feature>
<feature type="region of interest" description="Interaction with substrate tRNA" evidence="1">
    <location>
        <begin position="244"/>
        <end position="249"/>
    </location>
</feature>
<feature type="binding site" evidence="1">
    <location>
        <begin position="14"/>
        <end position="21"/>
    </location>
    <ligand>
        <name>ATP</name>
        <dbReference type="ChEBI" id="CHEBI:30616"/>
    </ligand>
</feature>
<feature type="binding site" evidence="1">
    <location>
        <begin position="16"/>
        <end position="21"/>
    </location>
    <ligand>
        <name>substrate</name>
    </ligand>
</feature>
<feature type="site" description="Interaction with substrate tRNA" evidence="1">
    <location>
        <position position="105"/>
    </location>
</feature>
<feature type="site" description="Interaction with substrate tRNA" evidence="1">
    <location>
        <position position="127"/>
    </location>
</feature>
<keyword id="KW-0067">ATP-binding</keyword>
<keyword id="KW-0460">Magnesium</keyword>
<keyword id="KW-0547">Nucleotide-binding</keyword>
<keyword id="KW-0808">Transferase</keyword>
<keyword id="KW-0819">tRNA processing</keyword>
<organism>
    <name type="scientific">Aeromonas salmonicida (strain A449)</name>
    <dbReference type="NCBI Taxonomy" id="382245"/>
    <lineage>
        <taxon>Bacteria</taxon>
        <taxon>Pseudomonadati</taxon>
        <taxon>Pseudomonadota</taxon>
        <taxon>Gammaproteobacteria</taxon>
        <taxon>Aeromonadales</taxon>
        <taxon>Aeromonadaceae</taxon>
        <taxon>Aeromonas</taxon>
    </lineage>
</organism>
<evidence type="ECO:0000255" key="1">
    <source>
        <dbReference type="HAMAP-Rule" id="MF_00185"/>
    </source>
</evidence>
<gene>
    <name evidence="1" type="primary">miaA</name>
    <name type="ordered locus">ASA_3370</name>
</gene>